<reference evidence="5" key="1">
    <citation type="journal article" date="1995" name="Biosci. Biotechnol. Biochem.">
        <title>Purification and characterization of three mitogenic lectins from the roots of pokeweed (Phytolacca americana).</title>
        <authorList>
            <person name="Kino M."/>
            <person name="Yamaguchi K."/>
            <person name="Umekawa H."/>
            <person name="Funatsu G."/>
        </authorList>
    </citation>
    <scope>PROTEIN SEQUENCE</scope>
    <scope>FUNCTION</scope>
    <scope>GLYCOSYLATION</scope>
    <source>
        <tissue evidence="3">Root</tissue>
    </source>
</reference>
<dbReference type="SMR" id="P84282"/>
<dbReference type="GO" id="GO:0030246">
    <property type="term" value="F:carbohydrate binding"/>
    <property type="evidence" value="ECO:0007669"/>
    <property type="project" value="UniProtKB-KW"/>
</dbReference>
<dbReference type="GO" id="GO:0008061">
    <property type="term" value="F:chitin binding"/>
    <property type="evidence" value="ECO:0000250"/>
    <property type="project" value="UniProtKB"/>
</dbReference>
<dbReference type="GO" id="GO:0051781">
    <property type="term" value="P:positive regulation of cell division"/>
    <property type="evidence" value="ECO:0007669"/>
    <property type="project" value="UniProtKB-KW"/>
</dbReference>
<dbReference type="GO" id="GO:0045840">
    <property type="term" value="P:positive regulation of mitotic nuclear division"/>
    <property type="evidence" value="ECO:0000314"/>
    <property type="project" value="UniProtKB"/>
</dbReference>
<dbReference type="Gene3D" id="3.30.60.10">
    <property type="entry name" value="Endochitinase-like"/>
    <property type="match status" value="1"/>
</dbReference>
<dbReference type="InterPro" id="IPR001002">
    <property type="entry name" value="Chitin-bd_1"/>
</dbReference>
<dbReference type="InterPro" id="IPR036861">
    <property type="entry name" value="Endochitinase-like_sf"/>
</dbReference>
<dbReference type="Pfam" id="PF00187">
    <property type="entry name" value="Chitin_bind_1"/>
    <property type="match status" value="1"/>
</dbReference>
<dbReference type="SUPFAM" id="SSF57016">
    <property type="entry name" value="Plant lectins/antimicrobial peptides"/>
    <property type="match status" value="1"/>
</dbReference>
<comment type="function">
    <text evidence="1 3">N-acetyl-D-glucosamine binding lectin. Shows low hemagglutinating activity towards human erythrocytes. Has low mitogenic activity towards human peripheral blood lymphocytes.</text>
</comment>
<comment type="PTM">
    <text evidence="3">Glycosylated.</text>
</comment>
<comment type="caution">
    <text evidence="5">The order of the last 3 peptides shown is unknown.</text>
</comment>
<evidence type="ECO:0000250" key="1">
    <source>
        <dbReference type="UniProtKB" id="Q9AYP9"/>
    </source>
</evidence>
<evidence type="ECO:0000255" key="2">
    <source>
        <dbReference type="PROSITE-ProRule" id="PRU00261"/>
    </source>
</evidence>
<evidence type="ECO:0000269" key="3">
    <source>
    </source>
</evidence>
<evidence type="ECO:0000303" key="4">
    <source>
    </source>
</evidence>
<evidence type="ECO:0000305" key="5"/>
<keyword id="KW-0147">Chitin-binding</keyword>
<keyword id="KW-0903">Direct protein sequencing</keyword>
<keyword id="KW-0325">Glycoprotein</keyword>
<keyword id="KW-0348">Hemagglutinin</keyword>
<keyword id="KW-0430">Lectin</keyword>
<keyword id="KW-0497">Mitogen</keyword>
<keyword id="KW-0677">Repeat</keyword>
<protein>
    <recommendedName>
        <fullName>Lectin-A</fullName>
    </recommendedName>
    <alternativeName>
        <fullName>PL-A</fullName>
    </alternativeName>
</protein>
<proteinExistence type="evidence at protein level"/>
<feature type="chain" id="PRO_0000124811" description="Lectin-A">
    <location>
        <begin position="1"/>
        <end position="64" status="greater than"/>
    </location>
</feature>
<feature type="domain" description="Chitin-binding type-1 1" evidence="2">
    <location>
        <begin position="1"/>
        <end position="20"/>
    </location>
</feature>
<feature type="domain" description="Chitin-binding type-1 2" evidence="2">
    <location>
        <begin position="22" status="less than"/>
        <end position="45" status="greater than"/>
    </location>
</feature>
<feature type="non-consecutive residues" evidence="5">
    <location>
        <begin position="8"/>
        <end position="9"/>
    </location>
</feature>
<feature type="non-consecutive residues" evidence="5">
    <location>
        <begin position="21"/>
        <end position="22"/>
    </location>
</feature>
<feature type="non-consecutive residues" evidence="5">
    <location>
        <begin position="30"/>
        <end position="31"/>
    </location>
</feature>
<feature type="non-consecutive residues" evidence="5">
    <location>
        <begin position="45"/>
        <end position="46"/>
    </location>
</feature>
<feature type="non-consecutive residues" evidence="5">
    <location>
        <begin position="48"/>
        <end position="49"/>
    </location>
</feature>
<feature type="non-consecutive residues" evidence="5">
    <location>
        <begin position="55"/>
        <end position="56"/>
    </location>
</feature>
<feature type="non-terminal residue" evidence="4">
    <location>
        <position position="64"/>
    </location>
</feature>
<accession>P84282</accession>
<organism>
    <name type="scientific">Phytolacca americana</name>
    <name type="common">American pokeweed</name>
    <name type="synonym">Phytolacca decandra</name>
    <dbReference type="NCBI Taxonomy" id="3527"/>
    <lineage>
        <taxon>Eukaryota</taxon>
        <taxon>Viridiplantae</taxon>
        <taxon>Streptophyta</taxon>
        <taxon>Embryophyta</taxon>
        <taxon>Tracheophyta</taxon>
        <taxon>Spermatophyta</taxon>
        <taxon>Magnoliopsida</taxon>
        <taxon>eudicotyledons</taxon>
        <taxon>Gunneridae</taxon>
        <taxon>Pentapetalae</taxon>
        <taxon>Caryophyllales</taxon>
        <taxon>Phytolaccaceae</taxon>
        <taxon>Phytolacca</taxon>
    </lineage>
</organism>
<sequence length="64" mass="7036">APECGREAHCGDDCQSQVVTRDFDDRTCPKLLCCSKDGWCGNTDANWRCGVDFGRTCPNDLCCS</sequence>
<name>LECA_PHYAM</name>